<gene>
    <name evidence="1" type="primary">ogg</name>
    <name type="ordered locus">Tpet_1106</name>
</gene>
<sequence>MEELLKELERIREEAKPLVEQRFEEFKRLGEEGTEEDLFCELSFCVLTANWSAEGGIRAQKEIGKGFVHLPLEELAEKLREVGHRYPQKRAEFIVENRKLLGKLKNLVKGDPFQSREFLVRNAKGIGWKEASHFLRNTGVEDLAILDKHVLRLMKRHGLIQEIPKGWSKKRYLYVEEILRKVAEAFGESPGKFDLYLWYLVKGKVDK</sequence>
<reference key="1">
    <citation type="submission" date="2007-05" db="EMBL/GenBank/DDBJ databases">
        <title>Complete sequence of Thermotoga petrophila RKU-1.</title>
        <authorList>
            <consortium name="US DOE Joint Genome Institute"/>
            <person name="Copeland A."/>
            <person name="Lucas S."/>
            <person name="Lapidus A."/>
            <person name="Barry K."/>
            <person name="Glavina del Rio T."/>
            <person name="Dalin E."/>
            <person name="Tice H."/>
            <person name="Pitluck S."/>
            <person name="Sims D."/>
            <person name="Brettin T."/>
            <person name="Bruce D."/>
            <person name="Detter J.C."/>
            <person name="Han C."/>
            <person name="Tapia R."/>
            <person name="Schmutz J."/>
            <person name="Larimer F."/>
            <person name="Land M."/>
            <person name="Hauser L."/>
            <person name="Kyrpides N."/>
            <person name="Mikhailova N."/>
            <person name="Nelson K."/>
            <person name="Gogarten J.P."/>
            <person name="Noll K."/>
            <person name="Richardson P."/>
        </authorList>
    </citation>
    <scope>NUCLEOTIDE SEQUENCE [LARGE SCALE GENOMIC DNA]</scope>
    <source>
        <strain>ATCC BAA-488 / DSM 13995 / JCM 10881 / RKU-1</strain>
    </source>
</reference>
<name>OGG1_THEP1</name>
<comment type="function">
    <text evidence="1">Catalyzes the excision of an oxidatively damaged form of guanine (7,8-dihydro-8-oxoguanine = 8-oxoG) from DNA. Also cleaves the DNA backbone at apurinic/apyrimidinic sites (AP sites).</text>
</comment>
<comment type="catalytic activity">
    <reaction evidence="1">
        <text>2'-deoxyribonucleotide-(2'-deoxyribose 5'-phosphate)-2'-deoxyribonucleotide-DNA = a 3'-end 2'-deoxyribonucleotide-(2,3-dehydro-2,3-deoxyribose 5'-phosphate)-DNA + a 5'-end 5'-phospho-2'-deoxyribonucleoside-DNA + H(+)</text>
        <dbReference type="Rhea" id="RHEA:66592"/>
        <dbReference type="Rhea" id="RHEA-COMP:13180"/>
        <dbReference type="Rhea" id="RHEA-COMP:16897"/>
        <dbReference type="Rhea" id="RHEA-COMP:17067"/>
        <dbReference type="ChEBI" id="CHEBI:15378"/>
        <dbReference type="ChEBI" id="CHEBI:136412"/>
        <dbReference type="ChEBI" id="CHEBI:157695"/>
        <dbReference type="ChEBI" id="CHEBI:167181"/>
        <dbReference type="EC" id="4.2.99.18"/>
    </reaction>
</comment>
<comment type="similarity">
    <text evidence="1">Belongs to the type-2 OGG1 family.</text>
</comment>
<organism>
    <name type="scientific">Thermotoga petrophila (strain ATCC BAA-488 / DSM 13995 / JCM 10881 / RKU-1)</name>
    <dbReference type="NCBI Taxonomy" id="390874"/>
    <lineage>
        <taxon>Bacteria</taxon>
        <taxon>Thermotogati</taxon>
        <taxon>Thermotogota</taxon>
        <taxon>Thermotogae</taxon>
        <taxon>Thermotogales</taxon>
        <taxon>Thermotogaceae</taxon>
        <taxon>Thermotoga</taxon>
    </lineage>
</organism>
<evidence type="ECO:0000255" key="1">
    <source>
        <dbReference type="HAMAP-Rule" id="MF_00241"/>
    </source>
</evidence>
<proteinExistence type="inferred from homology"/>
<accession>A5ILP7</accession>
<dbReference type="EC" id="3.2.2.-" evidence="1"/>
<dbReference type="EC" id="4.2.99.18" evidence="1"/>
<dbReference type="EMBL" id="CP000702">
    <property type="protein sequence ID" value="ABQ47120.1"/>
    <property type="molecule type" value="Genomic_DNA"/>
</dbReference>
<dbReference type="RefSeq" id="WP_004082367.1">
    <property type="nucleotide sequence ID" value="NC_009486.1"/>
</dbReference>
<dbReference type="SMR" id="A5ILP7"/>
<dbReference type="STRING" id="390874.Tpet_1106"/>
<dbReference type="KEGG" id="tpt:Tpet_1106"/>
<dbReference type="eggNOG" id="COG1059">
    <property type="taxonomic scope" value="Bacteria"/>
</dbReference>
<dbReference type="HOGENOM" id="CLU_104937_0_0_0"/>
<dbReference type="Proteomes" id="UP000006558">
    <property type="component" value="Chromosome"/>
</dbReference>
<dbReference type="GO" id="GO:0140078">
    <property type="term" value="F:class I DNA-(apurinic or apyrimidinic site) endonuclease activity"/>
    <property type="evidence" value="ECO:0007669"/>
    <property type="project" value="UniProtKB-EC"/>
</dbReference>
<dbReference type="GO" id="GO:0016799">
    <property type="term" value="F:hydrolase activity, hydrolyzing N-glycosyl compounds"/>
    <property type="evidence" value="ECO:0007669"/>
    <property type="project" value="UniProtKB-UniRule"/>
</dbReference>
<dbReference type="GO" id="GO:0006284">
    <property type="term" value="P:base-excision repair"/>
    <property type="evidence" value="ECO:0007669"/>
    <property type="project" value="UniProtKB-UniRule"/>
</dbReference>
<dbReference type="CDD" id="cd00056">
    <property type="entry name" value="ENDO3c"/>
    <property type="match status" value="1"/>
</dbReference>
<dbReference type="Gene3D" id="1.10.1670.10">
    <property type="entry name" value="Helix-hairpin-Helix base-excision DNA repair enzymes (C-terminal)"/>
    <property type="match status" value="1"/>
</dbReference>
<dbReference type="Gene3D" id="1.10.340.30">
    <property type="entry name" value="Hypothetical protein, domain 2"/>
    <property type="match status" value="1"/>
</dbReference>
<dbReference type="HAMAP" id="MF_00241">
    <property type="entry name" value="Ogg"/>
    <property type="match status" value="1"/>
</dbReference>
<dbReference type="InterPro" id="IPR012092">
    <property type="entry name" value="DNA_glyclase/AP_lyase_Ogg"/>
</dbReference>
<dbReference type="InterPro" id="IPR011257">
    <property type="entry name" value="DNA_glycosylase"/>
</dbReference>
<dbReference type="InterPro" id="IPR003265">
    <property type="entry name" value="HhH-GPD_domain"/>
</dbReference>
<dbReference type="InterPro" id="IPR023170">
    <property type="entry name" value="HhH_base_excis_C"/>
</dbReference>
<dbReference type="NCBIfam" id="NF002305">
    <property type="entry name" value="PRK01229.1"/>
    <property type="match status" value="1"/>
</dbReference>
<dbReference type="Pfam" id="PF22175">
    <property type="entry name" value="Ogg-HhH"/>
    <property type="match status" value="1"/>
</dbReference>
<dbReference type="PIRSF" id="PIRSF005954">
    <property type="entry name" value="Thrmst_ogg"/>
    <property type="match status" value="1"/>
</dbReference>
<dbReference type="SMART" id="SM00478">
    <property type="entry name" value="ENDO3c"/>
    <property type="match status" value="1"/>
</dbReference>
<dbReference type="SUPFAM" id="SSF48150">
    <property type="entry name" value="DNA-glycosylase"/>
    <property type="match status" value="1"/>
</dbReference>
<feature type="chain" id="PRO_1000005711" description="8-oxoguanine DNA glycosylase/AP lyase">
    <location>
        <begin position="1"/>
        <end position="207"/>
    </location>
</feature>
<feature type="active site" evidence="1">
    <location>
        <position position="129"/>
    </location>
</feature>
<feature type="active site" evidence="1">
    <location>
        <position position="147"/>
    </location>
</feature>
<feature type="site" description="Important for guanine/8-oxoguanine distinction" evidence="1">
    <location>
        <position position="207"/>
    </location>
</feature>
<keyword id="KW-0227">DNA damage</keyword>
<keyword id="KW-0234">DNA repair</keyword>
<keyword id="KW-0326">Glycosidase</keyword>
<keyword id="KW-0378">Hydrolase</keyword>
<keyword id="KW-0456">Lyase</keyword>
<keyword id="KW-0511">Multifunctional enzyme</keyword>
<protein>
    <recommendedName>
        <fullName evidence="1">8-oxoguanine DNA glycosylase/AP lyase</fullName>
    </recommendedName>
    <domain>
        <recommendedName>
            <fullName evidence="1">8-oxoguanine DNA glycosylase</fullName>
            <shortName evidence="1">8-oxoG DNA glycosylase</shortName>
            <ecNumber evidence="1">3.2.2.-</ecNumber>
        </recommendedName>
    </domain>
    <domain>
        <recommendedName>
            <fullName evidence="1">DNA-(apurinic or apyrimidinic site) lyase</fullName>
            <shortName evidence="1">AP lyase</shortName>
            <ecNumber evidence="1">4.2.99.18</ecNumber>
        </recommendedName>
    </domain>
</protein>